<dbReference type="EMBL" id="AE017355">
    <property type="protein sequence ID" value="AAT61466.1"/>
    <property type="molecule type" value="Genomic_DNA"/>
</dbReference>
<dbReference type="RefSeq" id="WP_000428021.1">
    <property type="nucleotide sequence ID" value="NC_005957.1"/>
</dbReference>
<dbReference type="RefSeq" id="YP_034361.1">
    <property type="nucleotide sequence ID" value="NC_005957.1"/>
</dbReference>
<dbReference type="SMR" id="Q6HQ03"/>
<dbReference type="GeneID" id="45020035"/>
<dbReference type="KEGG" id="btk:BT9727_0001"/>
<dbReference type="PATRIC" id="fig|281309.8.peg.1"/>
<dbReference type="HOGENOM" id="CLU_026910_3_1_9"/>
<dbReference type="Proteomes" id="UP000001301">
    <property type="component" value="Chromosome"/>
</dbReference>
<dbReference type="GO" id="GO:0005737">
    <property type="term" value="C:cytoplasm"/>
    <property type="evidence" value="ECO:0007669"/>
    <property type="project" value="UniProtKB-SubCell"/>
</dbReference>
<dbReference type="GO" id="GO:0005886">
    <property type="term" value="C:plasma membrane"/>
    <property type="evidence" value="ECO:0007669"/>
    <property type="project" value="TreeGrafter"/>
</dbReference>
<dbReference type="GO" id="GO:0005524">
    <property type="term" value="F:ATP binding"/>
    <property type="evidence" value="ECO:0007669"/>
    <property type="project" value="UniProtKB-UniRule"/>
</dbReference>
<dbReference type="GO" id="GO:0016887">
    <property type="term" value="F:ATP hydrolysis activity"/>
    <property type="evidence" value="ECO:0007669"/>
    <property type="project" value="InterPro"/>
</dbReference>
<dbReference type="GO" id="GO:0003688">
    <property type="term" value="F:DNA replication origin binding"/>
    <property type="evidence" value="ECO:0007669"/>
    <property type="project" value="UniProtKB-UniRule"/>
</dbReference>
<dbReference type="GO" id="GO:0008289">
    <property type="term" value="F:lipid binding"/>
    <property type="evidence" value="ECO:0007669"/>
    <property type="project" value="UniProtKB-KW"/>
</dbReference>
<dbReference type="GO" id="GO:0006270">
    <property type="term" value="P:DNA replication initiation"/>
    <property type="evidence" value="ECO:0007669"/>
    <property type="project" value="UniProtKB-UniRule"/>
</dbReference>
<dbReference type="GO" id="GO:0006275">
    <property type="term" value="P:regulation of DNA replication"/>
    <property type="evidence" value="ECO:0007669"/>
    <property type="project" value="UniProtKB-UniRule"/>
</dbReference>
<dbReference type="CDD" id="cd00009">
    <property type="entry name" value="AAA"/>
    <property type="match status" value="1"/>
</dbReference>
<dbReference type="CDD" id="cd06571">
    <property type="entry name" value="Bac_DnaA_C"/>
    <property type="match status" value="1"/>
</dbReference>
<dbReference type="FunFam" id="1.10.1750.10:FF:000003">
    <property type="entry name" value="Chromosomal replication initiator protein DnaA"/>
    <property type="match status" value="1"/>
</dbReference>
<dbReference type="FunFam" id="1.10.8.60:FF:000003">
    <property type="entry name" value="Chromosomal replication initiator protein DnaA"/>
    <property type="match status" value="1"/>
</dbReference>
<dbReference type="FunFam" id="3.30.300.180:FF:000002">
    <property type="entry name" value="Chromosomal replication initiator protein DnaA"/>
    <property type="match status" value="1"/>
</dbReference>
<dbReference type="FunFam" id="3.40.50.300:FF:000150">
    <property type="entry name" value="Chromosomal replication initiator protein DnaA"/>
    <property type="match status" value="1"/>
</dbReference>
<dbReference type="Gene3D" id="1.10.1750.10">
    <property type="match status" value="1"/>
</dbReference>
<dbReference type="Gene3D" id="1.10.8.60">
    <property type="match status" value="1"/>
</dbReference>
<dbReference type="Gene3D" id="3.30.300.180">
    <property type="match status" value="1"/>
</dbReference>
<dbReference type="Gene3D" id="3.40.50.300">
    <property type="entry name" value="P-loop containing nucleotide triphosphate hydrolases"/>
    <property type="match status" value="1"/>
</dbReference>
<dbReference type="HAMAP" id="MF_00377">
    <property type="entry name" value="DnaA_bact"/>
    <property type="match status" value="1"/>
</dbReference>
<dbReference type="InterPro" id="IPR003593">
    <property type="entry name" value="AAA+_ATPase"/>
</dbReference>
<dbReference type="InterPro" id="IPR001957">
    <property type="entry name" value="Chromosome_initiator_DnaA"/>
</dbReference>
<dbReference type="InterPro" id="IPR020591">
    <property type="entry name" value="Chromosome_initiator_DnaA-like"/>
</dbReference>
<dbReference type="InterPro" id="IPR018312">
    <property type="entry name" value="Chromosome_initiator_DnaA_CS"/>
</dbReference>
<dbReference type="InterPro" id="IPR013159">
    <property type="entry name" value="DnaA_C"/>
</dbReference>
<dbReference type="InterPro" id="IPR013317">
    <property type="entry name" value="DnaA_dom"/>
</dbReference>
<dbReference type="InterPro" id="IPR024633">
    <property type="entry name" value="DnaA_N_dom"/>
</dbReference>
<dbReference type="InterPro" id="IPR038454">
    <property type="entry name" value="DnaA_N_sf"/>
</dbReference>
<dbReference type="InterPro" id="IPR027417">
    <property type="entry name" value="P-loop_NTPase"/>
</dbReference>
<dbReference type="InterPro" id="IPR010921">
    <property type="entry name" value="Trp_repressor/repl_initiator"/>
</dbReference>
<dbReference type="NCBIfam" id="TIGR00362">
    <property type="entry name" value="DnaA"/>
    <property type="match status" value="1"/>
</dbReference>
<dbReference type="NCBIfam" id="NF010686">
    <property type="entry name" value="PRK14086.1"/>
    <property type="match status" value="1"/>
</dbReference>
<dbReference type="PANTHER" id="PTHR30050">
    <property type="entry name" value="CHROMOSOMAL REPLICATION INITIATOR PROTEIN DNAA"/>
    <property type="match status" value="1"/>
</dbReference>
<dbReference type="PANTHER" id="PTHR30050:SF2">
    <property type="entry name" value="CHROMOSOMAL REPLICATION INITIATOR PROTEIN DNAA"/>
    <property type="match status" value="1"/>
</dbReference>
<dbReference type="Pfam" id="PF00308">
    <property type="entry name" value="Bac_DnaA"/>
    <property type="match status" value="1"/>
</dbReference>
<dbReference type="Pfam" id="PF08299">
    <property type="entry name" value="Bac_DnaA_C"/>
    <property type="match status" value="1"/>
</dbReference>
<dbReference type="Pfam" id="PF11638">
    <property type="entry name" value="DnaA_N"/>
    <property type="match status" value="1"/>
</dbReference>
<dbReference type="PRINTS" id="PR00051">
    <property type="entry name" value="DNAA"/>
</dbReference>
<dbReference type="SMART" id="SM00382">
    <property type="entry name" value="AAA"/>
    <property type="match status" value="1"/>
</dbReference>
<dbReference type="SMART" id="SM00760">
    <property type="entry name" value="Bac_DnaA_C"/>
    <property type="match status" value="1"/>
</dbReference>
<dbReference type="SUPFAM" id="SSF52540">
    <property type="entry name" value="P-loop containing nucleoside triphosphate hydrolases"/>
    <property type="match status" value="1"/>
</dbReference>
<dbReference type="SUPFAM" id="SSF48295">
    <property type="entry name" value="TrpR-like"/>
    <property type="match status" value="1"/>
</dbReference>
<dbReference type="PROSITE" id="PS01008">
    <property type="entry name" value="DNAA"/>
    <property type="match status" value="1"/>
</dbReference>
<keyword id="KW-0067">ATP-binding</keyword>
<keyword id="KW-0963">Cytoplasm</keyword>
<keyword id="KW-0235">DNA replication</keyword>
<keyword id="KW-0238">DNA-binding</keyword>
<keyword id="KW-0446">Lipid-binding</keyword>
<keyword id="KW-0547">Nucleotide-binding</keyword>
<accession>Q6HQ03</accession>
<feature type="chain" id="PRO_0000114130" description="Chromosomal replication initiator protein DnaA">
    <location>
        <begin position="1"/>
        <end position="446"/>
    </location>
</feature>
<feature type="region of interest" description="Domain I, interacts with DnaA modulators" evidence="1">
    <location>
        <begin position="1"/>
        <end position="92"/>
    </location>
</feature>
<feature type="region of interest" description="Domain II" evidence="1">
    <location>
        <begin position="93"/>
        <end position="109"/>
    </location>
</feature>
<feature type="region of interest" description="Domain III, AAA+ region" evidence="1">
    <location>
        <begin position="110"/>
        <end position="326"/>
    </location>
</feature>
<feature type="region of interest" description="Domain IV, binds dsDNA" evidence="1">
    <location>
        <begin position="327"/>
        <end position="446"/>
    </location>
</feature>
<feature type="binding site" evidence="1">
    <location>
        <position position="154"/>
    </location>
    <ligand>
        <name>ATP</name>
        <dbReference type="ChEBI" id="CHEBI:30616"/>
    </ligand>
</feature>
<feature type="binding site" evidence="1">
    <location>
        <position position="156"/>
    </location>
    <ligand>
        <name>ATP</name>
        <dbReference type="ChEBI" id="CHEBI:30616"/>
    </ligand>
</feature>
<feature type="binding site" evidence="1">
    <location>
        <position position="157"/>
    </location>
    <ligand>
        <name>ATP</name>
        <dbReference type="ChEBI" id="CHEBI:30616"/>
    </ligand>
</feature>
<feature type="binding site" evidence="1">
    <location>
        <position position="158"/>
    </location>
    <ligand>
        <name>ATP</name>
        <dbReference type="ChEBI" id="CHEBI:30616"/>
    </ligand>
</feature>
<gene>
    <name evidence="1" type="primary">dnaA</name>
    <name type="ordered locus">BT9727_0001</name>
</gene>
<reference key="1">
    <citation type="journal article" date="2006" name="J. Bacteriol.">
        <title>Pathogenomic sequence analysis of Bacillus cereus and Bacillus thuringiensis isolates closely related to Bacillus anthracis.</title>
        <authorList>
            <person name="Han C.S."/>
            <person name="Xie G."/>
            <person name="Challacombe J.F."/>
            <person name="Altherr M.R."/>
            <person name="Bhotika S.S."/>
            <person name="Bruce D."/>
            <person name="Campbell C.S."/>
            <person name="Campbell M.L."/>
            <person name="Chen J."/>
            <person name="Chertkov O."/>
            <person name="Cleland C."/>
            <person name="Dimitrijevic M."/>
            <person name="Doggett N.A."/>
            <person name="Fawcett J.J."/>
            <person name="Glavina T."/>
            <person name="Goodwin L.A."/>
            <person name="Hill K.K."/>
            <person name="Hitchcock P."/>
            <person name="Jackson P.J."/>
            <person name="Keim P."/>
            <person name="Kewalramani A.R."/>
            <person name="Longmire J."/>
            <person name="Lucas S."/>
            <person name="Malfatti S."/>
            <person name="McMurry K."/>
            <person name="Meincke L.J."/>
            <person name="Misra M."/>
            <person name="Moseman B.L."/>
            <person name="Mundt M."/>
            <person name="Munk A.C."/>
            <person name="Okinaka R.T."/>
            <person name="Parson-Quintana B."/>
            <person name="Reilly L.P."/>
            <person name="Richardson P."/>
            <person name="Robinson D.L."/>
            <person name="Rubin E."/>
            <person name="Saunders E."/>
            <person name="Tapia R."/>
            <person name="Tesmer J.G."/>
            <person name="Thayer N."/>
            <person name="Thompson L.S."/>
            <person name="Tice H."/>
            <person name="Ticknor L.O."/>
            <person name="Wills P.L."/>
            <person name="Brettin T.S."/>
            <person name="Gilna P."/>
        </authorList>
    </citation>
    <scope>NUCLEOTIDE SEQUENCE [LARGE SCALE GENOMIC DNA]</scope>
    <source>
        <strain>97-27</strain>
    </source>
</reference>
<organism>
    <name type="scientific">Bacillus thuringiensis subsp. konkukian (strain 97-27)</name>
    <dbReference type="NCBI Taxonomy" id="281309"/>
    <lineage>
        <taxon>Bacteria</taxon>
        <taxon>Bacillati</taxon>
        <taxon>Bacillota</taxon>
        <taxon>Bacilli</taxon>
        <taxon>Bacillales</taxon>
        <taxon>Bacillaceae</taxon>
        <taxon>Bacillus</taxon>
        <taxon>Bacillus cereus group</taxon>
    </lineage>
</organism>
<protein>
    <recommendedName>
        <fullName evidence="1">Chromosomal replication initiator protein DnaA</fullName>
    </recommendedName>
</protein>
<proteinExistence type="inferred from homology"/>
<sequence>MENISDLWNSALKELEKKVSKPSYETWLKSTTAHNLKKDVLTITAPNEFARDWLESHYSELISETLYDLTGAKLAIRFIIPQSQAEEEIDLPPAKPNAAQDDSNHLPQSMLNPKYTFDTFVIGSGNRFAHAASLAVAEAPAKAYNPLFIYGGVGLGKTHLMHAIGHYVIEHNPNAKVVYLSSEKFTNEFINSIRDNKAVDFRNKYRNVDVLLIDDIQFLAGKEQTQEEFFHTFNALHEESKQIVISSDRPPKEIPTLEDRLRSRFEWGLITDITPPDLETRIAILRKKAKAEGLDIPNEVMLYIANQIDSNIRELEGALIRVVAYSSLINKDINADLAAEALKDIIPNSKPKIISIYDIQKAVGDVYQVKLEDFKAKKRTKSVAFPRQIAMYLSRELTDSSLPKIGEEFGGRDHTTVIHAHEKISKLLKTDTQLQKQVEEINDILK</sequence>
<comment type="function">
    <text evidence="1">Plays an essential role in the initiation and regulation of chromosomal replication. ATP-DnaA binds to the origin of replication (oriC) to initiate formation of the DNA replication initiation complex once per cell cycle. Binds the DnaA box (a 9 base pair repeat at the origin) and separates the double-stranded (ds)DNA. Forms a right-handed helical filament on oriC DNA; dsDNA binds to the exterior of the filament while single-stranded (ss)DNA is stabiized in the filament's interior. The ATP-DnaA-oriC complex binds and stabilizes one strand of the AT-rich DNA unwinding element (DUE), permitting loading of DNA polymerase. After initiation quickly degrades to an ADP-DnaA complex that is not apt for DNA replication. Binds acidic phospholipids.</text>
</comment>
<comment type="subunit">
    <text evidence="1">Oligomerizes as a right-handed, spiral filament on DNA at oriC.</text>
</comment>
<comment type="subcellular location">
    <subcellularLocation>
        <location evidence="1">Cytoplasm</location>
    </subcellularLocation>
</comment>
<comment type="domain">
    <text evidence="1">Domain I is involved in oligomerization and binding regulators, domain II is flexibile and of varying length in different bacteria, domain III forms the AAA+ region, while domain IV binds dsDNA.</text>
</comment>
<comment type="similarity">
    <text evidence="1">Belongs to the DnaA family.</text>
</comment>
<evidence type="ECO:0000255" key="1">
    <source>
        <dbReference type="HAMAP-Rule" id="MF_00377"/>
    </source>
</evidence>
<name>DNAA_BACHK</name>